<reference key="1">
    <citation type="journal article" date="2005" name="Science">
        <title>The transcriptional landscape of the mammalian genome.</title>
        <authorList>
            <person name="Carninci P."/>
            <person name="Kasukawa T."/>
            <person name="Katayama S."/>
            <person name="Gough J."/>
            <person name="Frith M.C."/>
            <person name="Maeda N."/>
            <person name="Oyama R."/>
            <person name="Ravasi T."/>
            <person name="Lenhard B."/>
            <person name="Wells C."/>
            <person name="Kodzius R."/>
            <person name="Shimokawa K."/>
            <person name="Bajic V.B."/>
            <person name="Brenner S.E."/>
            <person name="Batalov S."/>
            <person name="Forrest A.R."/>
            <person name="Zavolan M."/>
            <person name="Davis M.J."/>
            <person name="Wilming L.G."/>
            <person name="Aidinis V."/>
            <person name="Allen J.E."/>
            <person name="Ambesi-Impiombato A."/>
            <person name="Apweiler R."/>
            <person name="Aturaliya R.N."/>
            <person name="Bailey T.L."/>
            <person name="Bansal M."/>
            <person name="Baxter L."/>
            <person name="Beisel K.W."/>
            <person name="Bersano T."/>
            <person name="Bono H."/>
            <person name="Chalk A.M."/>
            <person name="Chiu K.P."/>
            <person name="Choudhary V."/>
            <person name="Christoffels A."/>
            <person name="Clutterbuck D.R."/>
            <person name="Crowe M.L."/>
            <person name="Dalla E."/>
            <person name="Dalrymple B.P."/>
            <person name="de Bono B."/>
            <person name="Della Gatta G."/>
            <person name="di Bernardo D."/>
            <person name="Down T."/>
            <person name="Engstrom P."/>
            <person name="Fagiolini M."/>
            <person name="Faulkner G."/>
            <person name="Fletcher C.F."/>
            <person name="Fukushima T."/>
            <person name="Furuno M."/>
            <person name="Futaki S."/>
            <person name="Gariboldi M."/>
            <person name="Georgii-Hemming P."/>
            <person name="Gingeras T.R."/>
            <person name="Gojobori T."/>
            <person name="Green R.E."/>
            <person name="Gustincich S."/>
            <person name="Harbers M."/>
            <person name="Hayashi Y."/>
            <person name="Hensch T.K."/>
            <person name="Hirokawa N."/>
            <person name="Hill D."/>
            <person name="Huminiecki L."/>
            <person name="Iacono M."/>
            <person name="Ikeo K."/>
            <person name="Iwama A."/>
            <person name="Ishikawa T."/>
            <person name="Jakt M."/>
            <person name="Kanapin A."/>
            <person name="Katoh M."/>
            <person name="Kawasawa Y."/>
            <person name="Kelso J."/>
            <person name="Kitamura H."/>
            <person name="Kitano H."/>
            <person name="Kollias G."/>
            <person name="Krishnan S.P."/>
            <person name="Kruger A."/>
            <person name="Kummerfeld S.K."/>
            <person name="Kurochkin I.V."/>
            <person name="Lareau L.F."/>
            <person name="Lazarevic D."/>
            <person name="Lipovich L."/>
            <person name="Liu J."/>
            <person name="Liuni S."/>
            <person name="McWilliam S."/>
            <person name="Madan Babu M."/>
            <person name="Madera M."/>
            <person name="Marchionni L."/>
            <person name="Matsuda H."/>
            <person name="Matsuzawa S."/>
            <person name="Miki H."/>
            <person name="Mignone F."/>
            <person name="Miyake S."/>
            <person name="Morris K."/>
            <person name="Mottagui-Tabar S."/>
            <person name="Mulder N."/>
            <person name="Nakano N."/>
            <person name="Nakauchi H."/>
            <person name="Ng P."/>
            <person name="Nilsson R."/>
            <person name="Nishiguchi S."/>
            <person name="Nishikawa S."/>
            <person name="Nori F."/>
            <person name="Ohara O."/>
            <person name="Okazaki Y."/>
            <person name="Orlando V."/>
            <person name="Pang K.C."/>
            <person name="Pavan W.J."/>
            <person name="Pavesi G."/>
            <person name="Pesole G."/>
            <person name="Petrovsky N."/>
            <person name="Piazza S."/>
            <person name="Reed J."/>
            <person name="Reid J.F."/>
            <person name="Ring B.Z."/>
            <person name="Ringwald M."/>
            <person name="Rost B."/>
            <person name="Ruan Y."/>
            <person name="Salzberg S.L."/>
            <person name="Sandelin A."/>
            <person name="Schneider C."/>
            <person name="Schoenbach C."/>
            <person name="Sekiguchi K."/>
            <person name="Semple C.A."/>
            <person name="Seno S."/>
            <person name="Sessa L."/>
            <person name="Sheng Y."/>
            <person name="Shibata Y."/>
            <person name="Shimada H."/>
            <person name="Shimada K."/>
            <person name="Silva D."/>
            <person name="Sinclair B."/>
            <person name="Sperling S."/>
            <person name="Stupka E."/>
            <person name="Sugiura K."/>
            <person name="Sultana R."/>
            <person name="Takenaka Y."/>
            <person name="Taki K."/>
            <person name="Tammoja K."/>
            <person name="Tan S.L."/>
            <person name="Tang S."/>
            <person name="Taylor M.S."/>
            <person name="Tegner J."/>
            <person name="Teichmann S.A."/>
            <person name="Ueda H.R."/>
            <person name="van Nimwegen E."/>
            <person name="Verardo R."/>
            <person name="Wei C.L."/>
            <person name="Yagi K."/>
            <person name="Yamanishi H."/>
            <person name="Zabarovsky E."/>
            <person name="Zhu S."/>
            <person name="Zimmer A."/>
            <person name="Hide W."/>
            <person name="Bult C."/>
            <person name="Grimmond S.M."/>
            <person name="Teasdale R.D."/>
            <person name="Liu E.T."/>
            <person name="Brusic V."/>
            <person name="Quackenbush J."/>
            <person name="Wahlestedt C."/>
            <person name="Mattick J.S."/>
            <person name="Hume D.A."/>
            <person name="Kai C."/>
            <person name="Sasaki D."/>
            <person name="Tomaru Y."/>
            <person name="Fukuda S."/>
            <person name="Kanamori-Katayama M."/>
            <person name="Suzuki M."/>
            <person name="Aoki J."/>
            <person name="Arakawa T."/>
            <person name="Iida J."/>
            <person name="Imamura K."/>
            <person name="Itoh M."/>
            <person name="Kato T."/>
            <person name="Kawaji H."/>
            <person name="Kawagashira N."/>
            <person name="Kawashima T."/>
            <person name="Kojima M."/>
            <person name="Kondo S."/>
            <person name="Konno H."/>
            <person name="Nakano K."/>
            <person name="Ninomiya N."/>
            <person name="Nishio T."/>
            <person name="Okada M."/>
            <person name="Plessy C."/>
            <person name="Shibata K."/>
            <person name="Shiraki T."/>
            <person name="Suzuki S."/>
            <person name="Tagami M."/>
            <person name="Waki K."/>
            <person name="Watahiki A."/>
            <person name="Okamura-Oho Y."/>
            <person name="Suzuki H."/>
            <person name="Kawai J."/>
            <person name="Hayashizaki Y."/>
        </authorList>
    </citation>
    <scope>NUCLEOTIDE SEQUENCE [LARGE SCALE MRNA]</scope>
    <source>
        <strain>C57BL/6J</strain>
        <tissue>Head</tissue>
        <tissue>Tongue</tissue>
    </source>
</reference>
<reference key="2">
    <citation type="journal article" date="2004" name="Genome Res.">
        <title>The status, quality, and expansion of the NIH full-length cDNA project: the Mammalian Gene Collection (MGC).</title>
        <authorList>
            <consortium name="The MGC Project Team"/>
        </authorList>
    </citation>
    <scope>NUCLEOTIDE SEQUENCE [LARGE SCALE MRNA]</scope>
    <source>
        <tissue>Eye</tissue>
    </source>
</reference>
<reference key="3">
    <citation type="journal article" date="2010" name="Cell">
        <title>A tissue-specific atlas of mouse protein phosphorylation and expression.</title>
        <authorList>
            <person name="Huttlin E.L."/>
            <person name="Jedrychowski M.P."/>
            <person name="Elias J.E."/>
            <person name="Goswami T."/>
            <person name="Rad R."/>
            <person name="Beausoleil S.A."/>
            <person name="Villen J."/>
            <person name="Haas W."/>
            <person name="Sowa M.E."/>
            <person name="Gygi S.P."/>
        </authorList>
    </citation>
    <scope>IDENTIFICATION BY MASS SPECTROMETRY [LARGE SCALE ANALYSIS]</scope>
    <source>
        <tissue>Testis</tissue>
    </source>
</reference>
<proteinExistence type="evidence at protein level"/>
<gene>
    <name type="primary">Smim19</name>
</gene>
<comment type="subcellular location">
    <subcellularLocation>
        <location evidence="3">Membrane</location>
        <topology evidence="3">Single-pass membrane protein</topology>
    </subcellularLocation>
</comment>
<comment type="similarity">
    <text evidence="3">Belongs to the SMIM19 family.</text>
</comment>
<comment type="sequence caution" evidence="3">
    <conflict type="erroneous initiation">
        <sequence resource="EMBL-CDS" id="AAH48089"/>
    </conflict>
    <text>Truncated N-terminus.</text>
</comment>
<comment type="sequence caution" evidence="3">
    <conflict type="erroneous initiation">
        <sequence resource="EMBL-CDS" id="BAE20860"/>
    </conflict>
    <text>Truncated N-terminus.</text>
</comment>
<comment type="sequence caution" evidence="3">
    <conflict type="erroneous initiation">
        <sequence resource="EMBL-CDS" id="BAE21793"/>
    </conflict>
    <text>Truncated N-terminus.</text>
</comment>
<comment type="sequence caution" evidence="3">
    <conflict type="erroneous initiation">
        <sequence resource="EMBL-CDS" id="BAE24529"/>
    </conflict>
    <text>Truncated N-terminus.</text>
</comment>
<evidence type="ECO:0000255" key="1"/>
<evidence type="ECO:0000256" key="2">
    <source>
        <dbReference type="SAM" id="MobiDB-lite"/>
    </source>
</evidence>
<evidence type="ECO:0000305" key="3"/>
<dbReference type="EMBL" id="AK131902">
    <property type="protein sequence ID" value="BAE20860.1"/>
    <property type="status" value="ALT_INIT"/>
    <property type="molecule type" value="mRNA"/>
</dbReference>
<dbReference type="EMBL" id="AK133712">
    <property type="protein sequence ID" value="BAE21793.1"/>
    <property type="status" value="ALT_INIT"/>
    <property type="molecule type" value="mRNA"/>
</dbReference>
<dbReference type="EMBL" id="AK140957">
    <property type="protein sequence ID" value="BAE24529.1"/>
    <property type="status" value="ALT_INIT"/>
    <property type="molecule type" value="mRNA"/>
</dbReference>
<dbReference type="EMBL" id="BC048089">
    <property type="protein sequence ID" value="AAH48089.1"/>
    <property type="status" value="ALT_INIT"/>
    <property type="molecule type" value="mRNA"/>
</dbReference>
<dbReference type="CCDS" id="CCDS52520.1"/>
<dbReference type="RefSeq" id="NP_001012685.2">
    <property type="nucleotide sequence ID" value="NM_001012667.2"/>
</dbReference>
<dbReference type="RefSeq" id="NP_001139589.1">
    <property type="nucleotide sequence ID" value="NM_001146117.2"/>
</dbReference>
<dbReference type="BioGRID" id="221783">
    <property type="interactions" value="1"/>
</dbReference>
<dbReference type="FunCoup" id="Q80ZU4">
    <property type="interactions" value="329"/>
</dbReference>
<dbReference type="STRING" id="10090.ENSMUSP00000131855"/>
<dbReference type="GlyGen" id="Q80ZU4">
    <property type="glycosylation" value="1 site"/>
</dbReference>
<dbReference type="iPTMnet" id="Q80ZU4"/>
<dbReference type="PhosphoSitePlus" id="Q80ZU4"/>
<dbReference type="PaxDb" id="10090-ENSMUSP00000131855"/>
<dbReference type="ProteomicsDB" id="261434"/>
<dbReference type="Pumba" id="Q80ZU4"/>
<dbReference type="Antibodypedia" id="2641">
    <property type="antibodies" value="66 antibodies from 11 providers"/>
</dbReference>
<dbReference type="DNASU" id="102032"/>
<dbReference type="Ensembl" id="ENSMUST00000033935.16">
    <property type="protein sequence ID" value="ENSMUSP00000033935.9"/>
    <property type="gene ID" value="ENSMUSG00000031534.16"/>
</dbReference>
<dbReference type="GeneID" id="102032"/>
<dbReference type="KEGG" id="mmu:102032"/>
<dbReference type="UCSC" id="uc009lde.2">
    <property type="organism name" value="mouse"/>
</dbReference>
<dbReference type="AGR" id="MGI:2142501"/>
<dbReference type="CTD" id="114926"/>
<dbReference type="MGI" id="MGI:2142501">
    <property type="gene designation" value="Smim19"/>
</dbReference>
<dbReference type="VEuPathDB" id="HostDB:ENSMUSG00000031534"/>
<dbReference type="eggNOG" id="ENOG502S18T">
    <property type="taxonomic scope" value="Eukaryota"/>
</dbReference>
<dbReference type="GeneTree" id="ENSGT00390000000436"/>
<dbReference type="HOGENOM" id="CLU_172229_0_0_1"/>
<dbReference type="InParanoid" id="Q80ZU4"/>
<dbReference type="OrthoDB" id="8663985at2759"/>
<dbReference type="PhylomeDB" id="Q80ZU4"/>
<dbReference type="BioGRID-ORCS" id="102032">
    <property type="hits" value="3 hits in 79 CRISPR screens"/>
</dbReference>
<dbReference type="ChiTaRS" id="Smim19">
    <property type="organism name" value="mouse"/>
</dbReference>
<dbReference type="PRO" id="PR:Q80ZU4"/>
<dbReference type="Proteomes" id="UP000000589">
    <property type="component" value="Chromosome 8"/>
</dbReference>
<dbReference type="RNAct" id="Q80ZU4">
    <property type="molecule type" value="protein"/>
</dbReference>
<dbReference type="Bgee" id="ENSMUSG00000031534">
    <property type="expression patterns" value="Expressed in interventricular septum and 249 other cell types or tissues"/>
</dbReference>
<dbReference type="ExpressionAtlas" id="Q80ZU4">
    <property type="expression patterns" value="baseline and differential"/>
</dbReference>
<dbReference type="GO" id="GO:0016020">
    <property type="term" value="C:membrane"/>
    <property type="evidence" value="ECO:0007669"/>
    <property type="project" value="UniProtKB-SubCell"/>
</dbReference>
<dbReference type="InterPro" id="IPR029368">
    <property type="entry name" value="SMIM19"/>
</dbReference>
<dbReference type="PANTHER" id="PTHR31888">
    <property type="entry name" value="SMALL INTEGRAL MEMBRANE PROTEIN 19"/>
    <property type="match status" value="1"/>
</dbReference>
<dbReference type="PANTHER" id="PTHR31888:SF1">
    <property type="entry name" value="SMALL INTEGRAL MEMBRANE PROTEIN 19"/>
    <property type="match status" value="1"/>
</dbReference>
<dbReference type="Pfam" id="PF15117">
    <property type="entry name" value="UPF0697"/>
    <property type="match status" value="1"/>
</dbReference>
<keyword id="KW-0472">Membrane</keyword>
<keyword id="KW-1185">Reference proteome</keyword>
<keyword id="KW-0812">Transmembrane</keyword>
<keyword id="KW-1133">Transmembrane helix</keyword>
<sequence>MAGSYGVMADDGSIDYTVHEAWNEATNVYLIVILVSFGLFMYAKRNKRKIMRIFSVPPTEGMLSEPSFYDTVSRIRLRQQVEAHPVSRKYEYQQPQSQADSVQLSLE</sequence>
<accession>Q80ZU4</accession>
<protein>
    <recommendedName>
        <fullName>Small integral membrane protein 19</fullName>
    </recommendedName>
</protein>
<name>SMI19_MOUSE</name>
<feature type="chain" id="PRO_0000264627" description="Small integral membrane protein 19">
    <location>
        <begin position="1"/>
        <end position="107"/>
    </location>
</feature>
<feature type="transmembrane region" description="Helical" evidence="1">
    <location>
        <begin position="25"/>
        <end position="43"/>
    </location>
</feature>
<feature type="region of interest" description="Disordered" evidence="2">
    <location>
        <begin position="88"/>
        <end position="107"/>
    </location>
</feature>
<feature type="compositionally biased region" description="Polar residues" evidence="2">
    <location>
        <begin position="93"/>
        <end position="107"/>
    </location>
</feature>
<organism>
    <name type="scientific">Mus musculus</name>
    <name type="common">Mouse</name>
    <dbReference type="NCBI Taxonomy" id="10090"/>
    <lineage>
        <taxon>Eukaryota</taxon>
        <taxon>Metazoa</taxon>
        <taxon>Chordata</taxon>
        <taxon>Craniata</taxon>
        <taxon>Vertebrata</taxon>
        <taxon>Euteleostomi</taxon>
        <taxon>Mammalia</taxon>
        <taxon>Eutheria</taxon>
        <taxon>Euarchontoglires</taxon>
        <taxon>Glires</taxon>
        <taxon>Rodentia</taxon>
        <taxon>Myomorpha</taxon>
        <taxon>Muroidea</taxon>
        <taxon>Muridae</taxon>
        <taxon>Murinae</taxon>
        <taxon>Mus</taxon>
        <taxon>Mus</taxon>
    </lineage>
</organism>